<evidence type="ECO:0000269" key="1">
    <source>
    </source>
</evidence>
<evidence type="ECO:0000269" key="2">
    <source>
    </source>
</evidence>
<evidence type="ECO:0000269" key="3">
    <source>
    </source>
</evidence>
<evidence type="ECO:0000269" key="4">
    <source>
    </source>
</evidence>
<evidence type="ECO:0000305" key="5"/>
<evidence type="ECO:0007829" key="6">
    <source>
        <dbReference type="PDB" id="1A0R"/>
    </source>
</evidence>
<evidence type="ECO:0007829" key="7">
    <source>
        <dbReference type="PDB" id="1MF6"/>
    </source>
</evidence>
<evidence type="ECO:0007829" key="8">
    <source>
        <dbReference type="PDB" id="1TBG"/>
    </source>
</evidence>
<evidence type="ECO:0007829" key="9">
    <source>
        <dbReference type="PDB" id="5KDO"/>
    </source>
</evidence>
<dbReference type="EMBL" id="K03255">
    <property type="protein sequence ID" value="AAA30794.1"/>
    <property type="molecule type" value="mRNA"/>
</dbReference>
<dbReference type="EMBL" id="K02199">
    <property type="protein sequence ID" value="AAA30793.1"/>
    <property type="molecule type" value="mRNA"/>
</dbReference>
<dbReference type="EMBL" id="S62031">
    <property type="protein sequence ID" value="AAB26895.1"/>
    <property type="molecule type" value="Genomic_DNA"/>
</dbReference>
<dbReference type="EMBL" id="S62029">
    <property type="protein sequence ID" value="AAB26895.1"/>
    <property type="status" value="JOINED"/>
    <property type="molecule type" value="Genomic_DNA"/>
</dbReference>
<dbReference type="EMBL" id="K02436">
    <property type="protein sequence ID" value="AAA30788.1"/>
    <property type="molecule type" value="mRNA"/>
</dbReference>
<dbReference type="PIR" id="I46939">
    <property type="entry name" value="RGBOGT"/>
</dbReference>
<dbReference type="RefSeq" id="NP_776752.1">
    <property type="nucleotide sequence ID" value="NM_174327.3"/>
</dbReference>
<dbReference type="RefSeq" id="XP_010802285.1">
    <property type="nucleotide sequence ID" value="XM_010803983.4"/>
</dbReference>
<dbReference type="PDB" id="1A0R">
    <property type="method" value="X-ray"/>
    <property type="resolution" value="2.80 A"/>
    <property type="chains" value="G=2-66"/>
</dbReference>
<dbReference type="PDB" id="1B9X">
    <property type="method" value="X-ray"/>
    <property type="resolution" value="3.00 A"/>
    <property type="chains" value="B=1-68"/>
</dbReference>
<dbReference type="PDB" id="1B9Y">
    <property type="method" value="X-ray"/>
    <property type="resolution" value="3.00 A"/>
    <property type="chains" value="B=1-68"/>
</dbReference>
<dbReference type="PDB" id="1GOT">
    <property type="method" value="X-ray"/>
    <property type="resolution" value="2.00 A"/>
    <property type="chains" value="G=2-66"/>
</dbReference>
<dbReference type="PDB" id="1MF6">
    <property type="method" value="NMR"/>
    <property type="chains" value="A=60-71"/>
</dbReference>
<dbReference type="PDB" id="1TBG">
    <property type="method" value="X-ray"/>
    <property type="resolution" value="2.10 A"/>
    <property type="chains" value="E/F/G/H=2-68"/>
</dbReference>
<dbReference type="PDB" id="2TRC">
    <property type="method" value="X-ray"/>
    <property type="resolution" value="2.40 A"/>
    <property type="chains" value="G=1-68"/>
</dbReference>
<dbReference type="PDB" id="5KDO">
    <property type="method" value="X-ray"/>
    <property type="resolution" value="1.90 A"/>
    <property type="chains" value="G=1-74"/>
</dbReference>
<dbReference type="PDB" id="6B20">
    <property type="method" value="X-ray"/>
    <property type="resolution" value="2.34 A"/>
    <property type="chains" value="C/D=7-66"/>
</dbReference>
<dbReference type="PDB" id="6OY9">
    <property type="method" value="EM"/>
    <property type="resolution" value="3.90 A"/>
    <property type="chains" value="G=2-74"/>
</dbReference>
<dbReference type="PDB" id="6OYA">
    <property type="method" value="EM"/>
    <property type="resolution" value="3.30 A"/>
    <property type="chains" value="G=2-74"/>
</dbReference>
<dbReference type="PDB" id="6QNO">
    <property type="method" value="EM"/>
    <property type="resolution" value="4.38 A"/>
    <property type="chains" value="G=1-74"/>
</dbReference>
<dbReference type="PDB" id="7O7F">
    <property type="method" value="EM"/>
    <property type="resolution" value="3.15 A"/>
    <property type="chains" value="G=1-74"/>
</dbReference>
<dbReference type="PDB" id="8P12">
    <property type="method" value="EM"/>
    <property type="resolution" value="3.21 A"/>
    <property type="chains" value="G=1-74"/>
</dbReference>
<dbReference type="PDB" id="8P13">
    <property type="method" value="EM"/>
    <property type="resolution" value="5.20 A"/>
    <property type="chains" value="G=1-74"/>
</dbReference>
<dbReference type="PDB" id="8P15">
    <property type="method" value="EM"/>
    <property type="resolution" value="5.90 A"/>
    <property type="chains" value="G=1-74"/>
</dbReference>
<dbReference type="PDB" id="9EPR">
    <property type="method" value="EM"/>
    <property type="resolution" value="4.90 A"/>
    <property type="chains" value="G=1-74"/>
</dbReference>
<dbReference type="PDBsum" id="1A0R"/>
<dbReference type="PDBsum" id="1B9X"/>
<dbReference type="PDBsum" id="1B9Y"/>
<dbReference type="PDBsum" id="1GOT"/>
<dbReference type="PDBsum" id="1MF6"/>
<dbReference type="PDBsum" id="1TBG"/>
<dbReference type="PDBsum" id="2TRC"/>
<dbReference type="PDBsum" id="5KDO"/>
<dbReference type="PDBsum" id="6B20"/>
<dbReference type="PDBsum" id="6OY9"/>
<dbReference type="PDBsum" id="6OYA"/>
<dbReference type="PDBsum" id="6QNO"/>
<dbReference type="PDBsum" id="7O7F"/>
<dbReference type="PDBsum" id="8P12"/>
<dbReference type="PDBsum" id="8P13"/>
<dbReference type="PDBsum" id="8P15"/>
<dbReference type="PDBsum" id="9EPR"/>
<dbReference type="EMDB" id="EMD-12746"/>
<dbReference type="EMDB" id="EMD-17343"/>
<dbReference type="EMDB" id="EMD-17344"/>
<dbReference type="EMDB" id="EMD-17345"/>
<dbReference type="EMDB" id="EMD-19884"/>
<dbReference type="EMDB" id="EMD-20222"/>
<dbReference type="EMDB" id="EMD-20223"/>
<dbReference type="EMDB" id="EMD-4598"/>
<dbReference type="SMR" id="P02698"/>
<dbReference type="BioGRID" id="159110">
    <property type="interactions" value="1"/>
</dbReference>
<dbReference type="CORUM" id="P02698"/>
<dbReference type="DIP" id="DIP-29228N"/>
<dbReference type="FunCoup" id="P02698">
    <property type="interactions" value="424"/>
</dbReference>
<dbReference type="IntAct" id="P02698">
    <property type="interactions" value="1"/>
</dbReference>
<dbReference type="MINT" id="P02698"/>
<dbReference type="STRING" id="9913.ENSBTAP00000062948"/>
<dbReference type="PaxDb" id="9913-ENSBTAP00000003465"/>
<dbReference type="ABCD" id="P02698">
    <property type="antibodies" value="3 sequenced antibodies"/>
</dbReference>
<dbReference type="Ensembl" id="ENSBTAT00000003465.4">
    <property type="protein sequence ID" value="ENSBTAP00000003465.3"/>
    <property type="gene ID" value="ENSBTAG00000002674.6"/>
</dbReference>
<dbReference type="GeneID" id="281796"/>
<dbReference type="KEGG" id="bta:281796"/>
<dbReference type="CTD" id="2792"/>
<dbReference type="VEuPathDB" id="HostDB:ENSBTAG00000002674"/>
<dbReference type="VGNC" id="VGNC:29470">
    <property type="gene designation" value="GNGT1"/>
</dbReference>
<dbReference type="eggNOG" id="KOG4119">
    <property type="taxonomic scope" value="Eukaryota"/>
</dbReference>
<dbReference type="GeneTree" id="ENSGT01100000263525"/>
<dbReference type="HOGENOM" id="CLU_168377_2_0_1"/>
<dbReference type="InParanoid" id="P02698"/>
<dbReference type="OMA" id="CEEVMEY"/>
<dbReference type="OrthoDB" id="9933679at2759"/>
<dbReference type="TreeFam" id="TF319909"/>
<dbReference type="Reactome" id="R-BTA-1296041">
    <property type="pathway name" value="Activation of G protein gated Potassium channels"/>
</dbReference>
<dbReference type="Reactome" id="R-BTA-202040">
    <property type="pathway name" value="G-protein activation"/>
</dbReference>
<dbReference type="Reactome" id="R-BTA-2485179">
    <property type="pathway name" value="Activation of the phototransduction cascade"/>
</dbReference>
<dbReference type="Reactome" id="R-BTA-2514859">
    <property type="pathway name" value="Inactivation, recovery and regulation of the phototransduction cascade"/>
</dbReference>
<dbReference type="Reactome" id="R-BTA-381676">
    <property type="pathway name" value="Glucagon-like Peptide-1 (GLP1) regulates insulin secretion"/>
</dbReference>
<dbReference type="Reactome" id="R-BTA-392170">
    <property type="pathway name" value="ADP signalling through P2Y purinoceptor 12"/>
</dbReference>
<dbReference type="Reactome" id="R-BTA-392451">
    <property type="pathway name" value="G beta:gamma signalling through PI3Kgamma"/>
</dbReference>
<dbReference type="Reactome" id="R-BTA-392851">
    <property type="pathway name" value="Prostacyclin signalling through prostacyclin receptor"/>
</dbReference>
<dbReference type="Reactome" id="R-BTA-400042">
    <property type="pathway name" value="Adrenaline,noradrenaline inhibits insulin secretion"/>
</dbReference>
<dbReference type="Reactome" id="R-BTA-4086398">
    <property type="pathway name" value="Ca2+ pathway"/>
</dbReference>
<dbReference type="Reactome" id="R-BTA-416476">
    <property type="pathway name" value="G alpha (q) signalling events"/>
</dbReference>
<dbReference type="Reactome" id="R-BTA-416482">
    <property type="pathway name" value="G alpha (12/13) signalling events"/>
</dbReference>
<dbReference type="Reactome" id="R-BTA-418217">
    <property type="pathway name" value="G beta:gamma signalling through PLC beta"/>
</dbReference>
<dbReference type="Reactome" id="R-BTA-418555">
    <property type="pathway name" value="G alpha (s) signalling events"/>
</dbReference>
<dbReference type="Reactome" id="R-BTA-418592">
    <property type="pathway name" value="ADP signalling through P2Y purinoceptor 1"/>
</dbReference>
<dbReference type="Reactome" id="R-BTA-418594">
    <property type="pathway name" value="G alpha (i) signalling events"/>
</dbReference>
<dbReference type="Reactome" id="R-BTA-418597">
    <property type="pathway name" value="G alpha (z) signalling events"/>
</dbReference>
<dbReference type="Reactome" id="R-BTA-420092">
    <property type="pathway name" value="Glucagon-type ligand receptors"/>
</dbReference>
<dbReference type="Reactome" id="R-BTA-428930">
    <property type="pathway name" value="Thromboxane signalling through TP receptor"/>
</dbReference>
<dbReference type="Reactome" id="R-BTA-432040">
    <property type="pathway name" value="Vasopressin regulates renal water homeostasis via Aquaporins"/>
</dbReference>
<dbReference type="Reactome" id="R-BTA-456926">
    <property type="pathway name" value="Thrombin signalling through proteinase activated receptors (PARs)"/>
</dbReference>
<dbReference type="Reactome" id="R-BTA-500657">
    <property type="pathway name" value="Presynaptic function of Kainate receptors"/>
</dbReference>
<dbReference type="Reactome" id="R-BTA-6814122">
    <property type="pathway name" value="Cooperation of PDCL (PhLP1) and TRiC/CCT in G-protein beta folding"/>
</dbReference>
<dbReference type="Reactome" id="R-BTA-8964315">
    <property type="pathway name" value="G beta:gamma signalling through BTK"/>
</dbReference>
<dbReference type="Reactome" id="R-BTA-8964616">
    <property type="pathway name" value="G beta:gamma signalling through CDC42"/>
</dbReference>
<dbReference type="Reactome" id="R-BTA-9009391">
    <property type="pathway name" value="Extra-nuclear estrogen signaling"/>
</dbReference>
<dbReference type="Reactome" id="R-BTA-9856530">
    <property type="pathway name" value="High laminar flow shear stress activates signaling by PIEZO1 and PECAM1:CDH5:KDR in endothelial cells"/>
</dbReference>
<dbReference type="Reactome" id="R-BTA-997272">
    <property type="pathway name" value="Inhibition of voltage gated Ca2+ channels via Gbeta/gamma subunits"/>
</dbReference>
<dbReference type="EvolutionaryTrace" id="P02698"/>
<dbReference type="Proteomes" id="UP000009136">
    <property type="component" value="Chromosome 4"/>
</dbReference>
<dbReference type="Bgee" id="ENSBTAG00000002674">
    <property type="expression patterns" value="Expressed in retina and 56 other cell types or tissues"/>
</dbReference>
<dbReference type="GO" id="GO:0005834">
    <property type="term" value="C:heterotrimeric G-protein complex"/>
    <property type="evidence" value="ECO:0000318"/>
    <property type="project" value="GO_Central"/>
</dbReference>
<dbReference type="GO" id="GO:0097381">
    <property type="term" value="C:photoreceptor disc membrane"/>
    <property type="evidence" value="ECO:0000304"/>
    <property type="project" value="Reactome"/>
</dbReference>
<dbReference type="GO" id="GO:0031681">
    <property type="term" value="F:G-protein beta-subunit binding"/>
    <property type="evidence" value="ECO:0000318"/>
    <property type="project" value="GO_Central"/>
</dbReference>
<dbReference type="GO" id="GO:0042462">
    <property type="term" value="P:eye photoreceptor cell development"/>
    <property type="evidence" value="ECO:0007669"/>
    <property type="project" value="Ensembl"/>
</dbReference>
<dbReference type="GO" id="GO:0007186">
    <property type="term" value="P:G protein-coupled receptor signaling pathway"/>
    <property type="evidence" value="ECO:0000318"/>
    <property type="project" value="GO_Central"/>
</dbReference>
<dbReference type="GO" id="GO:0007602">
    <property type="term" value="P:phototransduction"/>
    <property type="evidence" value="ECO:0007669"/>
    <property type="project" value="Ensembl"/>
</dbReference>
<dbReference type="GO" id="GO:0008104">
    <property type="term" value="P:protein localization"/>
    <property type="evidence" value="ECO:0007669"/>
    <property type="project" value="Ensembl"/>
</dbReference>
<dbReference type="CDD" id="cd00068">
    <property type="entry name" value="GGL"/>
    <property type="match status" value="1"/>
</dbReference>
<dbReference type="FunFam" id="4.10.260.10:FF:000001">
    <property type="entry name" value="Guanine nucleotide-binding protein subunit gamma"/>
    <property type="match status" value="1"/>
</dbReference>
<dbReference type="Gene3D" id="4.10.260.10">
    <property type="entry name" value="Transducin (heterotrimeric G protein), gamma chain"/>
    <property type="match status" value="1"/>
</dbReference>
<dbReference type="InterPro" id="IPR015898">
    <property type="entry name" value="G-protein_gamma-like_dom"/>
</dbReference>
<dbReference type="InterPro" id="IPR036284">
    <property type="entry name" value="GGL_sf"/>
</dbReference>
<dbReference type="InterPro" id="IPR001770">
    <property type="entry name" value="Gprotein-gamma"/>
</dbReference>
<dbReference type="PANTHER" id="PTHR13809">
    <property type="entry name" value="GUANINE NUCLEOTIDE-BINDING PROTEIN GAMMA SUBUNIT"/>
    <property type="match status" value="1"/>
</dbReference>
<dbReference type="Pfam" id="PF00631">
    <property type="entry name" value="G-gamma"/>
    <property type="match status" value="1"/>
</dbReference>
<dbReference type="PRINTS" id="PR00321">
    <property type="entry name" value="GPROTEING"/>
</dbReference>
<dbReference type="SMART" id="SM01224">
    <property type="entry name" value="G_gamma"/>
    <property type="match status" value="1"/>
</dbReference>
<dbReference type="SMART" id="SM00224">
    <property type="entry name" value="GGL"/>
    <property type="match status" value="1"/>
</dbReference>
<dbReference type="SUPFAM" id="SSF48670">
    <property type="entry name" value="Transducin (heterotrimeric G protein), gamma chain"/>
    <property type="match status" value="1"/>
</dbReference>
<dbReference type="PROSITE" id="PS50058">
    <property type="entry name" value="G_PROTEIN_GAMMA"/>
    <property type="match status" value="1"/>
</dbReference>
<name>GBG1_BOVIN</name>
<sequence length="74" mass="8544">MPVINIEDLTEKDKLKMEVDQLKKEVTLERMLVSKCCEEFRDYVEERSGEDPLVKGIPEDKNPFKELKGGCVIS</sequence>
<organism>
    <name type="scientific">Bos taurus</name>
    <name type="common">Bovine</name>
    <dbReference type="NCBI Taxonomy" id="9913"/>
    <lineage>
        <taxon>Eukaryota</taxon>
        <taxon>Metazoa</taxon>
        <taxon>Chordata</taxon>
        <taxon>Craniata</taxon>
        <taxon>Vertebrata</taxon>
        <taxon>Euteleostomi</taxon>
        <taxon>Mammalia</taxon>
        <taxon>Eutheria</taxon>
        <taxon>Laurasiatheria</taxon>
        <taxon>Artiodactyla</taxon>
        <taxon>Ruminantia</taxon>
        <taxon>Pecora</taxon>
        <taxon>Bovidae</taxon>
        <taxon>Bovinae</taxon>
        <taxon>Bos</taxon>
    </lineage>
</organism>
<reference key="1">
    <citation type="journal article" date="1984" name="Proc. Natl. Acad. Sci. U.S.A.">
        <title>Isolation and characterization of a cDNA clone for the gamma subunit of bovine retinal transducin.</title>
        <authorList>
            <person name="Hurley J.B."/>
            <person name="Fong H.K.W."/>
            <person name="Teplow D.B."/>
            <person name="Dreyer W.J."/>
            <person name="Simon M.I."/>
        </authorList>
    </citation>
    <scope>NUCLEOTIDE SEQUENCE [MRNA]</scope>
</reference>
<reference key="2">
    <citation type="journal article" date="1985" name="Proc. Natl. Acad. Sci. U.S.A.">
        <title>cDNA-derived amino acid sequence of the gamma subunit of GTPase from bovine rod outer segments.</title>
        <authorList>
            <person name="Yatsunami K."/>
            <person name="Pandya B.V."/>
            <person name="Oprian D.D."/>
            <person name="Khorana H.G."/>
        </authorList>
    </citation>
    <scope>NUCLEOTIDE SEQUENCE [MRNA]</scope>
</reference>
<reference key="3">
    <citation type="journal article" date="1993" name="Exp. Eye Res.">
        <title>Structure of the bovine transducin gamma subunit gene and analysis of promoter function in transgenic mice.</title>
        <authorList>
            <person name="Tao L."/>
            <person name="Pandey S."/>
            <person name="Simon M.I."/>
            <person name="Fong H.K."/>
        </authorList>
    </citation>
    <scope>NUCLEOTIDE SEQUENCE [GENOMIC DNA]</scope>
</reference>
<reference key="4">
    <citation type="journal article" date="1984" name="Biochem. Biophys. Res. Commun.">
        <title>Partial cDNA sequence of the gamma subunit of transducin.</title>
        <authorList>
            <person name="van Dop C."/>
            <person name="Medynski D.C."/>
            <person name="Sullivan K."/>
            <person name="Wu A.M."/>
            <person name="Fung B.K.-K."/>
            <person name="Bourne H.R."/>
        </authorList>
    </citation>
    <scope>NUCLEOTIDE SEQUENCE [MRNA] OF 1-40</scope>
</reference>
<reference key="5">
    <citation type="journal article" date="1985" name="FEBS Lett.">
        <title>Complete amino acid sequence of gamma-subunit of the GTP-binding protein from cattle retina.</title>
        <authorList>
            <person name="Ovchinnikov Y.A."/>
            <person name="Lipkin V.M."/>
            <person name="Shuvaeva T.M."/>
            <person name="Bogachuk A.P."/>
            <person name="Shemyakin V.V."/>
        </authorList>
    </citation>
    <scope>PROTEIN SEQUENCE OF 2-70</scope>
</reference>
<reference key="6">
    <citation type="journal article" date="1990" name="Nature">
        <title>Farnesylated gamma-subunit of photoreceptor G protein indispensable for GTP-binding.</title>
        <authorList>
            <person name="Fukuda Y."/>
            <person name="Takao T."/>
            <person name="Ohguro H."/>
            <person name="Yoshizawa T."/>
            <person name="Akino T."/>
            <person name="Shimonishi Y."/>
        </authorList>
    </citation>
    <scope>PROTEIN SEQUENCE OF 2-71</scope>
    <scope>ISOPRENYLATION AT CYS-71</scope>
    <scope>METHYLATION AT CYS-71</scope>
</reference>
<reference key="7">
    <citation type="journal article" date="1991" name="J. Biol. Chem.">
        <title>Gamma-subunits of G proteins, but not their alpha- or beta-subunits, are polyisoprenylated. Studies on post-translational modifications using in vitro translation with rabbit reticulocyte lysates.</title>
        <authorList>
            <person name="Sanford J."/>
            <person name="Codina J."/>
            <person name="Birnbaumer L."/>
        </authorList>
    </citation>
    <scope>ISOPRENYLATION AT CYS-71</scope>
</reference>
<reference key="8">
    <citation type="journal article" date="1990" name="Proc. Natl. Acad. Sci. U.S.A.">
        <title>The gamma subunit of transducin is farnesylated.</title>
        <authorList>
            <person name="Lai R.K."/>
            <person name="Perez-Sala D."/>
            <person name="Canada F.J."/>
            <person name="Rando R.R."/>
        </authorList>
    </citation>
    <scope>ISOPRENYLATION AT CYS-71</scope>
</reference>
<reference key="9">
    <citation type="journal article" date="1996" name="Nature">
        <title>Crystal structure of a G-protein beta gamma dimer at 2.1-A resolution.</title>
        <authorList>
            <person name="Sondek J."/>
            <person name="Bohm A."/>
            <person name="Lambright D.G."/>
            <person name="Hamm H.E."/>
            <person name="Sigler P.B."/>
        </authorList>
    </citation>
    <scope>X-RAY CRYSTALLOGRAPHY (2.1 ANGSTROMS) OF BETA-GAMMA DIMER</scope>
</reference>
<reference key="10">
    <citation type="journal article" date="1998" name="Structure">
        <title>Phosducin induces a structural change in transducin beta gamma.</title>
        <authorList>
            <person name="Loew A."/>
            <person name="Ho Y.K."/>
            <person name="Blundell T."/>
            <person name="Bax B."/>
        </authorList>
    </citation>
    <scope>X-RAY CRYSTALLOGRAPHY (2.8 ANGSTROMS) OF COMPLEX WITH PHOSDUCIN</scope>
</reference>
<keyword id="KW-0002">3D-structure</keyword>
<keyword id="KW-1003">Cell membrane</keyword>
<keyword id="KW-0903">Direct protein sequencing</keyword>
<keyword id="KW-0449">Lipoprotein</keyword>
<keyword id="KW-0472">Membrane</keyword>
<keyword id="KW-0488">Methylation</keyword>
<keyword id="KW-0636">Prenylation</keyword>
<keyword id="KW-1185">Reference proteome</keyword>
<keyword id="KW-0807">Transducer</keyword>
<gene>
    <name type="primary">GNGT1</name>
</gene>
<proteinExistence type="evidence at protein level"/>
<accession>P02698</accession>
<comment type="function">
    <text>Guanine nucleotide-binding proteins (G proteins) are involved as a modulator or transducer in various transmembrane signaling systems. The beta and gamma chains are required for the GTPase activity, for replacement of GDP by GTP, and for G protein-effector interaction.</text>
</comment>
<comment type="subunit">
    <text>G proteins are composed of 3 units, alpha, beta and gamma.</text>
</comment>
<comment type="subcellular location">
    <subcellularLocation>
        <location evidence="5">Cell membrane</location>
        <topology evidence="5">Lipid-anchor</topology>
        <orientation evidence="5">Cytoplasmic side</orientation>
    </subcellularLocation>
</comment>
<comment type="tissue specificity">
    <text>Retinal rod outer segment.</text>
</comment>
<comment type="similarity">
    <text evidence="5">Belongs to the G protein gamma family.</text>
</comment>
<comment type="caution">
    <text evidence="5">In PubMed:3917402 the authors propose that Cys-36 and Cys-37 are disulfide bonded because they could not be observed during peptide sequencing, but were observed after reduction by dithiothreitol and reaction with labeled iodoacetamide. The crystallographic structures do not support these cysteines being disulfide bonded. Artifactual oxidation and some other cysteine modifications might be consistent with these observations.</text>
</comment>
<feature type="initiator methionine" description="Removed" evidence="4">
    <location>
        <position position="1"/>
    </location>
</feature>
<feature type="chain" id="PRO_0000012601" description="Guanine nucleotide-binding protein G(T) subunit gamma-T1" evidence="3">
    <location>
        <begin position="2"/>
        <end position="71"/>
    </location>
</feature>
<feature type="propeptide" id="PRO_0000012602" description="Removed in mature form" evidence="3">
    <location>
        <begin position="72"/>
        <end position="74"/>
    </location>
</feature>
<feature type="modified residue" description="Cysteine methyl ester" evidence="3">
    <location>
        <position position="71"/>
    </location>
</feature>
<feature type="lipid moiety-binding region" description="S-farnesyl cysteine" evidence="1 2 3">
    <location>
        <position position="71"/>
    </location>
</feature>
<feature type="helix" evidence="8">
    <location>
        <begin position="3"/>
        <end position="5"/>
    </location>
</feature>
<feature type="helix" evidence="6">
    <location>
        <begin position="6"/>
        <end position="8"/>
    </location>
</feature>
<feature type="helix" evidence="9">
    <location>
        <begin position="11"/>
        <end position="25"/>
    </location>
</feature>
<feature type="helix" evidence="9">
    <location>
        <begin position="33"/>
        <end position="45"/>
    </location>
</feature>
<feature type="helix" evidence="9">
    <location>
        <begin position="48"/>
        <end position="50"/>
    </location>
</feature>
<feature type="helix" evidence="9">
    <location>
        <begin position="52"/>
        <end position="55"/>
    </location>
</feature>
<feature type="helix" evidence="9">
    <location>
        <begin position="59"/>
        <end position="61"/>
    </location>
</feature>
<feature type="helix" evidence="7">
    <location>
        <begin position="62"/>
        <end position="70"/>
    </location>
</feature>
<protein>
    <recommendedName>
        <fullName>Guanine nucleotide-binding protein G(T) subunit gamma-T1</fullName>
    </recommendedName>
    <alternativeName>
        <fullName>Transducin gamma chain</fullName>
    </alternativeName>
</protein>